<evidence type="ECO:0000255" key="1">
    <source>
        <dbReference type="HAMAP-Rule" id="MF_00444"/>
    </source>
</evidence>
<proteinExistence type="inferred from homology"/>
<comment type="function">
    <text evidence="1">Cleaves peptides in various proteins in a process that requires ATP hydrolysis. Has a chymotrypsin-like activity. Plays a major role in the degradation of misfolded proteins.</text>
</comment>
<comment type="catalytic activity">
    <reaction evidence="1">
        <text>Hydrolysis of proteins to small peptides in the presence of ATP and magnesium. alpha-casein is the usual test substrate. In the absence of ATP, only oligopeptides shorter than five residues are hydrolyzed (such as succinyl-Leu-Tyr-|-NHMec, and Leu-Tyr-Leu-|-Tyr-Trp, in which cleavage of the -Tyr-|-Leu- and -Tyr-|-Trp bonds also occurs).</text>
        <dbReference type="EC" id="3.4.21.92"/>
    </reaction>
</comment>
<comment type="subunit">
    <text evidence="1">Fourteen ClpP subunits assemble into 2 heptameric rings which stack back to back to give a disk-like structure with a central cavity, resembling the structure of eukaryotic proteasomes.</text>
</comment>
<comment type="subcellular location">
    <subcellularLocation>
        <location evidence="1">Cytoplasm</location>
    </subcellularLocation>
</comment>
<comment type="similarity">
    <text evidence="1">Belongs to the peptidase S14 family.</text>
</comment>
<protein>
    <recommendedName>
        <fullName evidence="1">ATP-dependent Clp protease proteolytic subunit 1</fullName>
        <ecNumber evidence="1">3.4.21.92</ecNumber>
    </recommendedName>
    <alternativeName>
        <fullName evidence="1">Endopeptidase Clp 1</fullName>
    </alternativeName>
</protein>
<feature type="chain" id="PRO_0000236387" description="ATP-dependent Clp protease proteolytic subunit 1">
    <location>
        <begin position="1"/>
        <end position="213"/>
    </location>
</feature>
<feature type="active site" description="Nucleophile" evidence="1">
    <location>
        <position position="108"/>
    </location>
</feature>
<feature type="active site" evidence="1">
    <location>
        <position position="133"/>
    </location>
</feature>
<gene>
    <name evidence="1" type="primary">clpP1</name>
    <name type="ordered locus">Francci3_1205</name>
</gene>
<accession>Q2JDQ9</accession>
<reference key="1">
    <citation type="journal article" date="2007" name="Genome Res.">
        <title>Genome characteristics of facultatively symbiotic Frankia sp. strains reflect host range and host plant biogeography.</title>
        <authorList>
            <person name="Normand P."/>
            <person name="Lapierre P."/>
            <person name="Tisa L.S."/>
            <person name="Gogarten J.P."/>
            <person name="Alloisio N."/>
            <person name="Bagnarol E."/>
            <person name="Bassi C.A."/>
            <person name="Berry A.M."/>
            <person name="Bickhart D.M."/>
            <person name="Choisne N."/>
            <person name="Couloux A."/>
            <person name="Cournoyer B."/>
            <person name="Cruveiller S."/>
            <person name="Daubin V."/>
            <person name="Demange N."/>
            <person name="Francino M.P."/>
            <person name="Goltsman E."/>
            <person name="Huang Y."/>
            <person name="Kopp O.R."/>
            <person name="Labarre L."/>
            <person name="Lapidus A."/>
            <person name="Lavire C."/>
            <person name="Marechal J."/>
            <person name="Martinez M."/>
            <person name="Mastronunzio J.E."/>
            <person name="Mullin B.C."/>
            <person name="Niemann J."/>
            <person name="Pujic P."/>
            <person name="Rawnsley T."/>
            <person name="Rouy Z."/>
            <person name="Schenowitz C."/>
            <person name="Sellstedt A."/>
            <person name="Tavares F."/>
            <person name="Tomkins J.P."/>
            <person name="Vallenet D."/>
            <person name="Valverde C."/>
            <person name="Wall L.G."/>
            <person name="Wang Y."/>
            <person name="Medigue C."/>
            <person name="Benson D.R."/>
        </authorList>
    </citation>
    <scope>NUCLEOTIDE SEQUENCE [LARGE SCALE GENOMIC DNA]</scope>
    <source>
        <strain>DSM 45818 / CECT 9043 / HFP020203 / CcI3</strain>
    </source>
</reference>
<keyword id="KW-0963">Cytoplasm</keyword>
<keyword id="KW-0378">Hydrolase</keyword>
<keyword id="KW-0645">Protease</keyword>
<keyword id="KW-1185">Reference proteome</keyword>
<keyword id="KW-0720">Serine protease</keyword>
<organism>
    <name type="scientific">Frankia casuarinae (strain DSM 45818 / CECT 9043 / HFP020203 / CcI3)</name>
    <dbReference type="NCBI Taxonomy" id="106370"/>
    <lineage>
        <taxon>Bacteria</taxon>
        <taxon>Bacillati</taxon>
        <taxon>Actinomycetota</taxon>
        <taxon>Actinomycetes</taxon>
        <taxon>Frankiales</taxon>
        <taxon>Frankiaceae</taxon>
        <taxon>Frankia</taxon>
    </lineage>
</organism>
<sequence length="213" mass="23039">MSNIAAPRLPVPGPDLRAPGQGGPAFDDQVFNRLLANRIVFLGSVVEDSIANAICAQLLLLNAEDPTRDIFLYINSPGGSVSAGMAIYDTMQFVENDVATVSLGLAASMGQFLLCAGASGKRYSLPHARIMMHQPSGGIGGTASDIAIQAEQMLYTKRMMQERIAFHTGQPIEQIERDSDRDRWFTAEEAKDYGFVDHVVQQARQVPSEGPVS</sequence>
<name>CLPP1_FRACC</name>
<dbReference type="EC" id="3.4.21.92" evidence="1"/>
<dbReference type="EMBL" id="CP000249">
    <property type="protein sequence ID" value="ABD10583.1"/>
    <property type="molecule type" value="Genomic_DNA"/>
</dbReference>
<dbReference type="RefSeq" id="WP_011435649.1">
    <property type="nucleotide sequence ID" value="NZ_JENI01000118.1"/>
</dbReference>
<dbReference type="SMR" id="Q2JDQ9"/>
<dbReference type="STRING" id="106370.Francci3_1205"/>
<dbReference type="MEROPS" id="S14.008"/>
<dbReference type="KEGG" id="fra:Francci3_1205"/>
<dbReference type="eggNOG" id="COG0740">
    <property type="taxonomic scope" value="Bacteria"/>
</dbReference>
<dbReference type="HOGENOM" id="CLU_058707_3_2_11"/>
<dbReference type="OrthoDB" id="9802800at2"/>
<dbReference type="PhylomeDB" id="Q2JDQ9"/>
<dbReference type="Proteomes" id="UP000001937">
    <property type="component" value="Chromosome"/>
</dbReference>
<dbReference type="GO" id="GO:0005737">
    <property type="term" value="C:cytoplasm"/>
    <property type="evidence" value="ECO:0007669"/>
    <property type="project" value="UniProtKB-SubCell"/>
</dbReference>
<dbReference type="GO" id="GO:0009368">
    <property type="term" value="C:endopeptidase Clp complex"/>
    <property type="evidence" value="ECO:0007669"/>
    <property type="project" value="TreeGrafter"/>
</dbReference>
<dbReference type="GO" id="GO:0004176">
    <property type="term" value="F:ATP-dependent peptidase activity"/>
    <property type="evidence" value="ECO:0007669"/>
    <property type="project" value="InterPro"/>
</dbReference>
<dbReference type="GO" id="GO:0051117">
    <property type="term" value="F:ATPase binding"/>
    <property type="evidence" value="ECO:0007669"/>
    <property type="project" value="TreeGrafter"/>
</dbReference>
<dbReference type="GO" id="GO:0004252">
    <property type="term" value="F:serine-type endopeptidase activity"/>
    <property type="evidence" value="ECO:0007669"/>
    <property type="project" value="UniProtKB-UniRule"/>
</dbReference>
<dbReference type="GO" id="GO:0006515">
    <property type="term" value="P:protein quality control for misfolded or incompletely synthesized proteins"/>
    <property type="evidence" value="ECO:0007669"/>
    <property type="project" value="TreeGrafter"/>
</dbReference>
<dbReference type="CDD" id="cd07017">
    <property type="entry name" value="S14_ClpP_2"/>
    <property type="match status" value="1"/>
</dbReference>
<dbReference type="FunFam" id="3.90.226.10:FF:000002">
    <property type="entry name" value="ATP-dependent Clp protease proteolytic subunit"/>
    <property type="match status" value="1"/>
</dbReference>
<dbReference type="Gene3D" id="3.90.226.10">
    <property type="entry name" value="2-enoyl-CoA Hydratase, Chain A, domain 1"/>
    <property type="match status" value="1"/>
</dbReference>
<dbReference type="HAMAP" id="MF_00444">
    <property type="entry name" value="ClpP"/>
    <property type="match status" value="1"/>
</dbReference>
<dbReference type="InterPro" id="IPR001907">
    <property type="entry name" value="ClpP"/>
</dbReference>
<dbReference type="InterPro" id="IPR029045">
    <property type="entry name" value="ClpP/crotonase-like_dom_sf"/>
</dbReference>
<dbReference type="InterPro" id="IPR023562">
    <property type="entry name" value="ClpP/TepA"/>
</dbReference>
<dbReference type="InterPro" id="IPR033135">
    <property type="entry name" value="ClpP_His_AS"/>
</dbReference>
<dbReference type="NCBIfam" id="NF001368">
    <property type="entry name" value="PRK00277.1"/>
    <property type="match status" value="1"/>
</dbReference>
<dbReference type="NCBIfam" id="NF009205">
    <property type="entry name" value="PRK12553.1"/>
    <property type="match status" value="1"/>
</dbReference>
<dbReference type="PANTHER" id="PTHR10381">
    <property type="entry name" value="ATP-DEPENDENT CLP PROTEASE PROTEOLYTIC SUBUNIT"/>
    <property type="match status" value="1"/>
</dbReference>
<dbReference type="PANTHER" id="PTHR10381:SF70">
    <property type="entry name" value="ATP-DEPENDENT CLP PROTEASE PROTEOLYTIC SUBUNIT"/>
    <property type="match status" value="1"/>
</dbReference>
<dbReference type="Pfam" id="PF00574">
    <property type="entry name" value="CLP_protease"/>
    <property type="match status" value="1"/>
</dbReference>
<dbReference type="PRINTS" id="PR00127">
    <property type="entry name" value="CLPPROTEASEP"/>
</dbReference>
<dbReference type="SUPFAM" id="SSF52096">
    <property type="entry name" value="ClpP/crotonase"/>
    <property type="match status" value="1"/>
</dbReference>
<dbReference type="PROSITE" id="PS00382">
    <property type="entry name" value="CLP_PROTEASE_HIS"/>
    <property type="match status" value="1"/>
</dbReference>